<feature type="chain" id="PRO_0000057300" description="Deoxyribose-phosphate aldolase">
    <location>
        <begin position="1"/>
        <end position="259"/>
    </location>
</feature>
<feature type="active site" description="Proton donor/acceptor" evidence="1">
    <location>
        <position position="102"/>
    </location>
</feature>
<feature type="active site" description="Schiff-base intermediate with acetaldehyde" evidence="1">
    <location>
        <position position="167"/>
    </location>
</feature>
<feature type="active site" description="Proton donor/acceptor" evidence="1">
    <location>
        <position position="201"/>
    </location>
</feature>
<protein>
    <recommendedName>
        <fullName evidence="1">Deoxyribose-phosphate aldolase</fullName>
        <shortName evidence="1">DERA</shortName>
        <ecNumber evidence="1">4.1.2.4</ecNumber>
    </recommendedName>
    <alternativeName>
        <fullName evidence="1">2-deoxy-D-ribose 5-phosphate aldolase</fullName>
    </alternativeName>
    <alternativeName>
        <fullName evidence="1">Phosphodeoxyriboaldolase</fullName>
        <shortName evidence="1">Deoxyriboaldolase</shortName>
    </alternativeName>
</protein>
<gene>
    <name evidence="1" type="primary">deoC</name>
    <name type="ordered locus">plu0520</name>
</gene>
<keyword id="KW-0963">Cytoplasm</keyword>
<keyword id="KW-0456">Lyase</keyword>
<keyword id="KW-1185">Reference proteome</keyword>
<keyword id="KW-0704">Schiff base</keyword>
<comment type="function">
    <text evidence="1">Catalyzes a reversible aldol reaction between acetaldehyde and D-glyceraldehyde 3-phosphate to generate 2-deoxy-D-ribose 5-phosphate.</text>
</comment>
<comment type="catalytic activity">
    <reaction evidence="1">
        <text>2-deoxy-D-ribose 5-phosphate = D-glyceraldehyde 3-phosphate + acetaldehyde</text>
        <dbReference type="Rhea" id="RHEA:12821"/>
        <dbReference type="ChEBI" id="CHEBI:15343"/>
        <dbReference type="ChEBI" id="CHEBI:59776"/>
        <dbReference type="ChEBI" id="CHEBI:62877"/>
        <dbReference type="EC" id="4.1.2.4"/>
    </reaction>
</comment>
<comment type="pathway">
    <text evidence="1">Carbohydrate degradation; 2-deoxy-D-ribose 1-phosphate degradation; D-glyceraldehyde 3-phosphate and acetaldehyde from 2-deoxy-alpha-D-ribose 1-phosphate: step 2/2.</text>
</comment>
<comment type="subcellular location">
    <subcellularLocation>
        <location evidence="1">Cytoplasm</location>
    </subcellularLocation>
</comment>
<comment type="similarity">
    <text evidence="1">Belongs to the DeoC/FbaB aldolase family. DeoC type 2 subfamily.</text>
</comment>
<organism>
    <name type="scientific">Photorhabdus laumondii subsp. laumondii (strain DSM 15139 / CIP 105565 / TT01)</name>
    <name type="common">Photorhabdus luminescens subsp. laumondii</name>
    <dbReference type="NCBI Taxonomy" id="243265"/>
    <lineage>
        <taxon>Bacteria</taxon>
        <taxon>Pseudomonadati</taxon>
        <taxon>Pseudomonadota</taxon>
        <taxon>Gammaproteobacteria</taxon>
        <taxon>Enterobacterales</taxon>
        <taxon>Morganellaceae</taxon>
        <taxon>Photorhabdus</taxon>
    </lineage>
</organism>
<name>DEOC_PHOLL</name>
<accession>Q7N932</accession>
<proteinExistence type="inferred from homology"/>
<sequence>MTDLTAAAQRALSLMDLTTLNDNDTDEKVTALCHQAKSLAGNTAAICIYPRFIPLARKVLREQGTPEIRIATVTNFPHGHDDIDIALAETQAAIAYGADEVDVVFPYRALMASNEQVGFEMVKACKVACAEADVLLKVIIETGELKEASLIRKASEISINAGADFIKTSTGKVPVNATLASAEIMMKVIHEMGVGETVGFKPAGGVRTAEEAAQYLALADHIMGDKWVDARHFRFGASSLLGNLLNTLGHQGQKQSSHY</sequence>
<reference key="1">
    <citation type="journal article" date="2003" name="Nat. Biotechnol.">
        <title>The genome sequence of the entomopathogenic bacterium Photorhabdus luminescens.</title>
        <authorList>
            <person name="Duchaud E."/>
            <person name="Rusniok C."/>
            <person name="Frangeul L."/>
            <person name="Buchrieser C."/>
            <person name="Givaudan A."/>
            <person name="Taourit S."/>
            <person name="Bocs S."/>
            <person name="Boursaux-Eude C."/>
            <person name="Chandler M."/>
            <person name="Charles J.-F."/>
            <person name="Dassa E."/>
            <person name="Derose R."/>
            <person name="Derzelle S."/>
            <person name="Freyssinet G."/>
            <person name="Gaudriault S."/>
            <person name="Medigue C."/>
            <person name="Lanois A."/>
            <person name="Powell K."/>
            <person name="Siguier P."/>
            <person name="Vincent R."/>
            <person name="Wingate V."/>
            <person name="Zouine M."/>
            <person name="Glaser P."/>
            <person name="Boemare N."/>
            <person name="Danchin A."/>
            <person name="Kunst F."/>
        </authorList>
    </citation>
    <scope>NUCLEOTIDE SEQUENCE [LARGE SCALE GENOMIC DNA]</scope>
    <source>
        <strain>DSM 15139 / CIP 105565 / TT01</strain>
    </source>
</reference>
<evidence type="ECO:0000255" key="1">
    <source>
        <dbReference type="HAMAP-Rule" id="MF_00592"/>
    </source>
</evidence>
<dbReference type="EC" id="4.1.2.4" evidence="1"/>
<dbReference type="EMBL" id="BX571860">
    <property type="protein sequence ID" value="CAE12815.1"/>
    <property type="molecule type" value="Genomic_DNA"/>
</dbReference>
<dbReference type="RefSeq" id="WP_011144904.1">
    <property type="nucleotide sequence ID" value="NC_005126.1"/>
</dbReference>
<dbReference type="SMR" id="Q7N932"/>
<dbReference type="STRING" id="243265.plu0520"/>
<dbReference type="GeneID" id="48846809"/>
<dbReference type="KEGG" id="plu:plu0520"/>
<dbReference type="eggNOG" id="COG0274">
    <property type="taxonomic scope" value="Bacteria"/>
</dbReference>
<dbReference type="HOGENOM" id="CLU_053595_3_1_6"/>
<dbReference type="OrthoDB" id="6579831at2"/>
<dbReference type="UniPathway" id="UPA00002">
    <property type="reaction ID" value="UER00468"/>
</dbReference>
<dbReference type="Proteomes" id="UP000002514">
    <property type="component" value="Chromosome"/>
</dbReference>
<dbReference type="GO" id="GO:0005737">
    <property type="term" value="C:cytoplasm"/>
    <property type="evidence" value="ECO:0007669"/>
    <property type="project" value="UniProtKB-SubCell"/>
</dbReference>
<dbReference type="GO" id="GO:0004139">
    <property type="term" value="F:deoxyribose-phosphate aldolase activity"/>
    <property type="evidence" value="ECO:0007669"/>
    <property type="project" value="UniProtKB-UniRule"/>
</dbReference>
<dbReference type="GO" id="GO:0006018">
    <property type="term" value="P:2-deoxyribose 1-phosphate catabolic process"/>
    <property type="evidence" value="ECO:0007669"/>
    <property type="project" value="UniProtKB-UniRule"/>
</dbReference>
<dbReference type="GO" id="GO:0016052">
    <property type="term" value="P:carbohydrate catabolic process"/>
    <property type="evidence" value="ECO:0007669"/>
    <property type="project" value="TreeGrafter"/>
</dbReference>
<dbReference type="GO" id="GO:0009264">
    <property type="term" value="P:deoxyribonucleotide catabolic process"/>
    <property type="evidence" value="ECO:0007669"/>
    <property type="project" value="InterPro"/>
</dbReference>
<dbReference type="CDD" id="cd00959">
    <property type="entry name" value="DeoC"/>
    <property type="match status" value="1"/>
</dbReference>
<dbReference type="FunFam" id="3.20.20.70:FF:000034">
    <property type="entry name" value="Deoxyribose-phosphate aldolase"/>
    <property type="match status" value="1"/>
</dbReference>
<dbReference type="Gene3D" id="3.20.20.70">
    <property type="entry name" value="Aldolase class I"/>
    <property type="match status" value="1"/>
</dbReference>
<dbReference type="HAMAP" id="MF_00592">
    <property type="entry name" value="DeoC_type2"/>
    <property type="match status" value="1"/>
</dbReference>
<dbReference type="InterPro" id="IPR013785">
    <property type="entry name" value="Aldolase_TIM"/>
</dbReference>
<dbReference type="InterPro" id="IPR011343">
    <property type="entry name" value="DeoC"/>
</dbReference>
<dbReference type="InterPro" id="IPR002915">
    <property type="entry name" value="DeoC/FbaB/LacD_aldolase"/>
</dbReference>
<dbReference type="InterPro" id="IPR023649">
    <property type="entry name" value="DeoC_typeII"/>
</dbReference>
<dbReference type="NCBIfam" id="TIGR00126">
    <property type="entry name" value="deoC"/>
    <property type="match status" value="1"/>
</dbReference>
<dbReference type="PANTHER" id="PTHR10889">
    <property type="entry name" value="DEOXYRIBOSE-PHOSPHATE ALDOLASE"/>
    <property type="match status" value="1"/>
</dbReference>
<dbReference type="PANTHER" id="PTHR10889:SF3">
    <property type="entry name" value="DEOXYRIBOSE-PHOSPHATE ALDOLASE"/>
    <property type="match status" value="1"/>
</dbReference>
<dbReference type="Pfam" id="PF01791">
    <property type="entry name" value="DeoC"/>
    <property type="match status" value="1"/>
</dbReference>
<dbReference type="PIRSF" id="PIRSF001357">
    <property type="entry name" value="DeoC"/>
    <property type="match status" value="1"/>
</dbReference>
<dbReference type="SMART" id="SM01133">
    <property type="entry name" value="DeoC"/>
    <property type="match status" value="1"/>
</dbReference>
<dbReference type="SUPFAM" id="SSF51569">
    <property type="entry name" value="Aldolase"/>
    <property type="match status" value="1"/>
</dbReference>